<feature type="chain" id="PRO_0000412296" description="Cbb3-type cytochrome c oxidase subunit FixP">
    <location>
        <begin position="1"/>
        <end position="290"/>
    </location>
</feature>
<feature type="topological domain" description="Cytoplasmic" evidence="3 6">
    <location>
        <begin position="1"/>
        <end position="32"/>
    </location>
</feature>
<feature type="transmembrane region" description="Helical" evidence="6">
    <location>
        <begin position="33"/>
        <end position="53"/>
    </location>
</feature>
<feature type="topological domain" description="Periplasmic" evidence="3 6">
    <location>
        <begin position="54"/>
        <end position="290"/>
    </location>
</feature>
<feature type="domain" description="Cytochrome c 1" evidence="7">
    <location>
        <begin position="109"/>
        <end position="198"/>
    </location>
</feature>
<feature type="domain" description="Cytochrome c 2" evidence="7">
    <location>
        <begin position="206"/>
        <end position="287"/>
    </location>
</feature>
<feature type="binding site" description="covalent" evidence="2">
    <location>
        <position position="122"/>
    </location>
    <ligand>
        <name>heme c</name>
        <dbReference type="ChEBI" id="CHEBI:61717"/>
        <label>1</label>
    </ligand>
</feature>
<feature type="binding site" description="covalent" evidence="2">
    <location>
        <position position="125"/>
    </location>
    <ligand>
        <name>heme c</name>
        <dbReference type="ChEBI" id="CHEBI:61717"/>
        <label>1</label>
    </ligand>
</feature>
<feature type="binding site" description="axial binding residue" evidence="2">
    <location>
        <position position="126"/>
    </location>
    <ligand>
        <name>heme c</name>
        <dbReference type="ChEBI" id="CHEBI:61717"/>
        <label>1</label>
    </ligand>
    <ligandPart>
        <name>Fe</name>
        <dbReference type="ChEBI" id="CHEBI:18248"/>
    </ligandPart>
</feature>
<feature type="binding site" description="axial binding residue" evidence="2">
    <location>
        <position position="173"/>
    </location>
    <ligand>
        <name>heme c</name>
        <dbReference type="ChEBI" id="CHEBI:61717"/>
        <label>2</label>
    </ligand>
    <ligandPart>
        <name>Fe</name>
        <dbReference type="ChEBI" id="CHEBI:18248"/>
    </ligandPart>
</feature>
<feature type="binding site" description="covalent" evidence="2">
    <location>
        <position position="219"/>
    </location>
    <ligand>
        <name>heme c</name>
        <dbReference type="ChEBI" id="CHEBI:61717"/>
        <label>2</label>
    </ligand>
</feature>
<feature type="binding site" description="covalent" evidence="2">
    <location>
        <position position="222"/>
    </location>
    <ligand>
        <name>heme c</name>
        <dbReference type="ChEBI" id="CHEBI:61717"/>
        <label>2</label>
    </ligand>
</feature>
<feature type="binding site" description="axial binding residue" evidence="2">
    <location>
        <position position="223"/>
    </location>
    <ligand>
        <name>heme c</name>
        <dbReference type="ChEBI" id="CHEBI:61717"/>
        <label>2</label>
    </ligand>
    <ligandPart>
        <name>Fe</name>
        <dbReference type="ChEBI" id="CHEBI:18248"/>
    </ligandPart>
</feature>
<feature type="binding site" description="axial binding residue" evidence="2">
    <location>
        <position position="264"/>
    </location>
    <ligand>
        <name>heme c</name>
        <dbReference type="ChEBI" id="CHEBI:61717"/>
        <label>1</label>
    </ligand>
    <ligandPart>
        <name>Fe</name>
        <dbReference type="ChEBI" id="CHEBI:18248"/>
    </ligandPart>
</feature>
<feature type="mutagenesis site" description="85% decrease in cytochrome c oxidase complex activity and assembly defects of the complex; when associated with S-125 or with S-125, S-219 and S-222. 85% decrease in cytochrome c oxidase complex activity and assembly defects of the complex." evidence="12">
    <original>C</original>
    <variation>S</variation>
    <location>
        <position position="122"/>
    </location>
</feature>
<feature type="mutagenesis site" description="85% decrease in cytochrome c oxidase complex activity and assembly defects of the complex; when associated with S-122 or with S-122, S-219 and S-222. 85% decrease in cytochrome c oxidase complex activity and assembly defects of the complex." evidence="12">
    <original>C</original>
    <variation>S</variation>
    <location>
        <position position="125"/>
    </location>
</feature>
<feature type="mutagenesis site" description="85% decrease in cytochrome c oxidase complex activity and assembly defects of the complex; when associated with S-222 or with S-222, S-122 and S-125. 85% decrease in cytochrome c oxidase complex activity and assembly defects of the complex." evidence="12">
    <original>C</original>
    <variation>S</variation>
    <location>
        <position position="219"/>
    </location>
</feature>
<feature type="mutagenesis site" description="85% decrease in cytochrome c oxidase complex activity and assembly defects of the complex; when associated with S-219 or with S-219, S-122 and S-125. 85% decrease in cytochrome c oxidase complex activity and assembly defects of the complex." evidence="12">
    <original>C</original>
    <variation>S</variation>
    <location>
        <position position="222"/>
    </location>
</feature>
<accession>Q03075</accession>
<accession>D4AER5</accession>
<accession>E7FH98</accession>
<accession>Q79UA4</accession>
<accession>Q89RK3</accession>
<keyword id="KW-0997">Cell inner membrane</keyword>
<keyword id="KW-1003">Cell membrane</keyword>
<keyword id="KW-0903">Direct protein sequencing</keyword>
<keyword id="KW-0249">Electron transport</keyword>
<keyword id="KW-0349">Heme</keyword>
<keyword id="KW-0375">Hydrogen ion transport</keyword>
<keyword id="KW-0406">Ion transport</keyword>
<keyword id="KW-0408">Iron</keyword>
<keyword id="KW-0472">Membrane</keyword>
<keyword id="KW-0479">Metal-binding</keyword>
<keyword id="KW-0560">Oxidoreductase</keyword>
<keyword id="KW-1185">Reference proteome</keyword>
<keyword id="KW-0677">Repeat</keyword>
<keyword id="KW-0679">Respiratory chain</keyword>
<keyword id="KW-0812">Transmembrane</keyword>
<keyword id="KW-1133">Transmembrane helix</keyword>
<keyword id="KW-0813">Transport</keyword>
<evidence type="ECO:0000250" key="1">
    <source>
        <dbReference type="UniProtKB" id="D5ARP7"/>
    </source>
</evidence>
<evidence type="ECO:0000250" key="2">
    <source>
        <dbReference type="UniProtKB" id="D9IA45"/>
    </source>
</evidence>
<evidence type="ECO:0000250" key="3">
    <source>
        <dbReference type="UniProtKB" id="Q3J015"/>
    </source>
</evidence>
<evidence type="ECO:0000250" key="4">
    <source>
        <dbReference type="UniProtKB" id="Q52689"/>
    </source>
</evidence>
<evidence type="ECO:0000250" key="5">
    <source>
        <dbReference type="UniProtKB" id="Q8KS19"/>
    </source>
</evidence>
<evidence type="ECO:0000255" key="6"/>
<evidence type="ECO:0000255" key="7">
    <source>
        <dbReference type="PROSITE-ProRule" id="PRU00433"/>
    </source>
</evidence>
<evidence type="ECO:0000269" key="8">
    <source>
    </source>
</evidence>
<evidence type="ECO:0000269" key="9">
    <source>
    </source>
</evidence>
<evidence type="ECO:0000269" key="10">
    <source>
    </source>
</evidence>
<evidence type="ECO:0000269" key="11">
    <source>
    </source>
</evidence>
<evidence type="ECO:0000269" key="12">
    <source>
    </source>
</evidence>
<evidence type="ECO:0000269" key="13">
    <source>
    </source>
</evidence>
<evidence type="ECO:0000305" key="14"/>
<evidence type="ECO:0000312" key="15">
    <source>
        <dbReference type="EMBL" id="AAA26206.1"/>
    </source>
</evidence>
<evidence type="ECO:0000312" key="16">
    <source>
        <dbReference type="EMBL" id="BAC48031.1"/>
    </source>
</evidence>
<evidence type="ECO:0000312" key="17">
    <source>
        <dbReference type="EMBL" id="CAA06282.1"/>
    </source>
</evidence>
<name>FIXP_BRADU</name>
<dbReference type="EMBL" id="L07487">
    <property type="protein sequence ID" value="AAA26206.1"/>
    <property type="molecule type" value="Genomic_DNA"/>
</dbReference>
<dbReference type="EMBL" id="AJ005001">
    <property type="protein sequence ID" value="CAA06282.1"/>
    <property type="molecule type" value="Genomic_DNA"/>
</dbReference>
<dbReference type="EMBL" id="BA000040">
    <property type="protein sequence ID" value="BAC48031.1"/>
    <property type="molecule type" value="Genomic_DNA"/>
</dbReference>
<dbReference type="PIR" id="D47468">
    <property type="entry name" value="D47468"/>
</dbReference>
<dbReference type="RefSeq" id="NP_769406.1">
    <property type="nucleotide sequence ID" value="NC_004463.1"/>
</dbReference>
<dbReference type="RefSeq" id="WP_011085551.1">
    <property type="nucleotide sequence ID" value="NC_004463.1"/>
</dbReference>
<dbReference type="SMR" id="Q03075"/>
<dbReference type="STRING" id="224911.AAV28_10855"/>
<dbReference type="EnsemblBacteria" id="BAC48031">
    <property type="protein sequence ID" value="BAC48031"/>
    <property type="gene ID" value="BAC48031"/>
</dbReference>
<dbReference type="GeneID" id="46489812"/>
<dbReference type="KEGG" id="bja:blr2766"/>
<dbReference type="PATRIC" id="fig|224911.44.peg.2387"/>
<dbReference type="eggNOG" id="COG2010">
    <property type="taxonomic scope" value="Bacteria"/>
</dbReference>
<dbReference type="HOGENOM" id="CLU_047545_2_0_5"/>
<dbReference type="InParanoid" id="Q03075"/>
<dbReference type="OrthoDB" id="9811281at2"/>
<dbReference type="PhylomeDB" id="Q03075"/>
<dbReference type="UniPathway" id="UPA00705"/>
<dbReference type="Proteomes" id="UP000002526">
    <property type="component" value="Chromosome"/>
</dbReference>
<dbReference type="GO" id="GO:0005886">
    <property type="term" value="C:plasma membrane"/>
    <property type="evidence" value="ECO:0007669"/>
    <property type="project" value="UniProtKB-SubCell"/>
</dbReference>
<dbReference type="GO" id="GO:0004129">
    <property type="term" value="F:cytochrome-c oxidase activity"/>
    <property type="evidence" value="ECO:0000318"/>
    <property type="project" value="GO_Central"/>
</dbReference>
<dbReference type="GO" id="GO:0020037">
    <property type="term" value="F:heme binding"/>
    <property type="evidence" value="ECO:0007669"/>
    <property type="project" value="InterPro"/>
</dbReference>
<dbReference type="GO" id="GO:0005506">
    <property type="term" value="F:iron ion binding"/>
    <property type="evidence" value="ECO:0007669"/>
    <property type="project" value="InterPro"/>
</dbReference>
<dbReference type="GO" id="GO:0006119">
    <property type="term" value="P:oxidative phosphorylation"/>
    <property type="evidence" value="ECO:0007669"/>
    <property type="project" value="UniProtKB-UniPathway"/>
</dbReference>
<dbReference type="Gene3D" id="6.10.280.130">
    <property type="match status" value="1"/>
</dbReference>
<dbReference type="Gene3D" id="1.10.760.10">
    <property type="entry name" value="Cytochrome c-like domain"/>
    <property type="match status" value="2"/>
</dbReference>
<dbReference type="InterPro" id="IPR032858">
    <property type="entry name" value="CcoP_N"/>
</dbReference>
<dbReference type="InterPro" id="IPR038414">
    <property type="entry name" value="CcoP_N_sf"/>
</dbReference>
<dbReference type="InterPro" id="IPR009056">
    <property type="entry name" value="Cyt_c-like_dom"/>
</dbReference>
<dbReference type="InterPro" id="IPR036909">
    <property type="entry name" value="Cyt_c-like_dom_sf"/>
</dbReference>
<dbReference type="InterPro" id="IPR008168">
    <property type="entry name" value="Cyt_C_IC"/>
</dbReference>
<dbReference type="InterPro" id="IPR004678">
    <property type="entry name" value="Cyt_c_oxidase_cbb3_su3"/>
</dbReference>
<dbReference type="InterPro" id="IPR050597">
    <property type="entry name" value="Cytochrome_c_Oxidase_Subunit"/>
</dbReference>
<dbReference type="NCBIfam" id="TIGR00782">
    <property type="entry name" value="ccoP"/>
    <property type="match status" value="1"/>
</dbReference>
<dbReference type="PANTHER" id="PTHR33751">
    <property type="entry name" value="CBB3-TYPE CYTOCHROME C OXIDASE SUBUNIT FIXP"/>
    <property type="match status" value="1"/>
</dbReference>
<dbReference type="PANTHER" id="PTHR33751:SF1">
    <property type="entry name" value="CBB3-TYPE CYTOCHROME C OXIDASE SUBUNIT FIXP"/>
    <property type="match status" value="1"/>
</dbReference>
<dbReference type="Pfam" id="PF00034">
    <property type="entry name" value="Cytochrom_C"/>
    <property type="match status" value="1"/>
</dbReference>
<dbReference type="Pfam" id="PF13442">
    <property type="entry name" value="Cytochrome_CBB3"/>
    <property type="match status" value="1"/>
</dbReference>
<dbReference type="Pfam" id="PF14715">
    <property type="entry name" value="FixP_N"/>
    <property type="match status" value="1"/>
</dbReference>
<dbReference type="PIRSF" id="PIRSF000006">
    <property type="entry name" value="Cbb3-Cox_fixP"/>
    <property type="match status" value="1"/>
</dbReference>
<dbReference type="PRINTS" id="PR00605">
    <property type="entry name" value="CYTCHROMECIC"/>
</dbReference>
<dbReference type="SUPFAM" id="SSF46626">
    <property type="entry name" value="Cytochrome c"/>
    <property type="match status" value="2"/>
</dbReference>
<dbReference type="PROSITE" id="PS51007">
    <property type="entry name" value="CYTC"/>
    <property type="match status" value="2"/>
</dbReference>
<protein>
    <recommendedName>
        <fullName evidence="1">Cbb3-type cytochrome c oxidase subunit FixP</fullName>
        <shortName evidence="1">Cbb3-Cox subunit FixP</shortName>
    </recommendedName>
    <alternativeName>
        <fullName evidence="4">C-type cytochrome FixP</fullName>
        <shortName evidence="1">Cyt c(FixP)</shortName>
    </alternativeName>
    <alternativeName>
        <fullName evidence="16">Cytochrome c oxidase subunit III</fullName>
    </alternativeName>
</protein>
<gene>
    <name evidence="15" type="primary">fixP</name>
    <name type="ordered locus">blr2766</name>
</gene>
<comment type="function">
    <text evidence="2 8 9 10 11 12 13">C-type cytochrome. Part of the cbb3-type cytochrome c oxidase complex. FixP subunit is required for transferring electrons from donor cytochrome c via its heme groups to FixO subunit. From there, electrons are shuttled to the catalytic binuclear center of FixN subunit where oxygen reduction takes place. The complex also functions as a proton pump.</text>
</comment>
<comment type="cofactor">
    <cofactor evidence="2 11 12 13">
        <name>heme c</name>
        <dbReference type="ChEBI" id="CHEBI:61717"/>
    </cofactor>
    <text evidence="2 11 12 13">Binds 2 heme C groups per subunit.</text>
</comment>
<comment type="pathway">
    <text evidence="1">Energy metabolism; oxidative phosphorylation.</text>
</comment>
<comment type="subunit">
    <text evidence="1 10 11 12">Component of the cbb3-type cytochrome c oxidase at least composed of FixN, FixO, FixQ and FixP.</text>
</comment>
<comment type="subcellular location">
    <subcellularLocation>
        <location evidence="9 13">Cell inner membrane</location>
        <topology evidence="5 6 9 13">Single-pass membrane protein</topology>
    </subcellularLocation>
</comment>
<comment type="mass spectrometry" mass="32130.0" method="Electrospray" evidence="12"/>
<comment type="disruption phenotype">
    <text evidence="10">Microaerobically grown cells show 38% decrease in cytochrome c oxadase complex activity. Between 0-5% nitrogen fixing activity of the nitrogenase in root nodules when in symbiosis with soybean.</text>
</comment>
<comment type="similarity">
    <text evidence="14">Belongs to the CcoP / FixP family.</text>
</comment>
<reference evidence="14 15" key="1">
    <citation type="journal article" date="1993" name="Proc. Natl. Acad. Sci. U.S.A.">
        <title>Genes for a microaerobically induced oxidase complex in Bradyrhizobium japonicum are essential for a nitrogen-fixing endosymbiosis.</title>
        <authorList>
            <person name="Preisig O."/>
            <person name="Anthamatten D."/>
            <person name="Hennecke H."/>
        </authorList>
    </citation>
    <scope>NUCLEOTIDE SEQUENCE [GENOMIC DNA]</scope>
    <scope>CATALYTIC ACTIVITY OF THE CYTOCHROME C OXIDASE COMPLEX</scope>
    <scope>FUNCTION</scope>
    <scope>SUBCELLULAR LOCATION</scope>
</reference>
<reference evidence="17" key="2">
    <citation type="journal article" date="1998" name="J. Bacteriol.">
        <title>Bradyrhizobium japonicum FixK2, a crucial distributor in the FixLJ-dependent regulatory cascade for control of genes inducible by low oxygen levels.</title>
        <authorList>
            <person name="Nellen-Anthamatten D."/>
            <person name="Rossi P."/>
            <person name="Preisig O."/>
            <person name="Kullik I."/>
            <person name="Babst M."/>
            <person name="Fischer H.M."/>
            <person name="Hennecke H."/>
        </authorList>
    </citation>
    <scope>NUCLEOTIDE SEQUENCE [GENOMIC DNA]</scope>
    <source>
        <strain evidence="17">USDA 110spc4</strain>
    </source>
</reference>
<reference evidence="16" key="3">
    <citation type="journal article" date="2002" name="DNA Res.">
        <title>Complete genomic sequence of nitrogen-fixing symbiotic bacterium Bradyrhizobium japonicum USDA110.</title>
        <authorList>
            <person name="Kaneko T."/>
            <person name="Nakamura Y."/>
            <person name="Sato S."/>
            <person name="Minamisawa K."/>
            <person name="Uchiumi T."/>
            <person name="Sasamoto S."/>
            <person name="Watanabe A."/>
            <person name="Idesawa K."/>
            <person name="Iriguchi M."/>
            <person name="Kawashima K."/>
            <person name="Kohara M."/>
            <person name="Matsumoto M."/>
            <person name="Shimpo S."/>
            <person name="Tsuruoka H."/>
            <person name="Wada T."/>
            <person name="Yamada M."/>
            <person name="Tabata S."/>
        </authorList>
    </citation>
    <scope>NUCLEOTIDE SEQUENCE [LARGE SCALE GENOMIC DNA]</scope>
    <source>
        <strain>JCM 10833 / BCRC 13528 / IAM 13628 / NBRC 14792 / USDA 110</strain>
    </source>
</reference>
<reference evidence="14" key="4">
    <citation type="journal article" date="1996" name="J. Bacteriol.">
        <title>A high-affinity cbb3-type cytochrome oxidase terminates the symbiosis-specific respiratory chain of Bradyrhizobium japonicum.</title>
        <authorList>
            <person name="Preisig O."/>
            <person name="Zufferey R."/>
            <person name="Thony-Meyer L."/>
            <person name="Appleby C.A."/>
            <person name="Hennecke H."/>
        </authorList>
    </citation>
    <scope>PROTEIN SEQUENCE OF 1-7</scope>
    <scope>FUNCTION</scope>
    <scope>CATALYTIC ACTIVITY OF THE CYTOCHROME C OXIDASE COMPLEX</scope>
    <scope>COFACTOR</scope>
    <scope>SUBUNIT</scope>
</reference>
<reference evidence="14" key="5">
    <citation type="journal article" date="1996" name="J. Biol. Chem.">
        <title>Assembly and function of the cytochrome cbb3 oxidase subunits in Bradyrhizobium japonicum.</title>
        <authorList>
            <person name="Zufferey R."/>
            <person name="Preisig O."/>
            <person name="Hennecke H."/>
            <person name="Thony-Meyer L."/>
        </authorList>
    </citation>
    <scope>FUNCTION</scope>
    <scope>CATALYTIC ACTIVITY OF THE CYTOCHROME C OXIDASE COMPLEX</scope>
    <scope>SUBUNIT</scope>
    <scope>DISRUPTION PHENOTYPE</scope>
</reference>
<reference evidence="14" key="6">
    <citation type="journal article" date="1997" name="FEBS Lett.">
        <title>Heme C incorporation into the c-type cytochromes FixO and FixP is essential for assembly of the Bradyrhizobium japonicum cbb3-type oxidase.</title>
        <authorList>
            <person name="Zufferey R."/>
            <person name="Hennecke H."/>
            <person name="Thony-Meyer L."/>
        </authorList>
    </citation>
    <scope>FUNCTION</scope>
    <scope>CATALYTIC ACTIVITY OF THE CYTOCHROME C OXIDASE COMPLEX</scope>
    <scope>COFACTOR</scope>
    <scope>SUBUNIT</scope>
    <scope>MASS SPECTROMETRY</scope>
    <scope>MUTAGENESIS OF CYS-122; CYS-125; CYS-219 AND CYS-222</scope>
</reference>
<reference evidence="14" key="7">
    <citation type="journal article" date="1998" name="Biochem. Biophys. Res. Commun.">
        <title>Overproduction of the Bradyrhizobium japonicum c-type cytochrome subunits of the cbb3 oxidase in Escherichia coli.</title>
        <authorList>
            <person name="Arslan E."/>
            <person name="Schulz H."/>
            <person name="Zufferey R."/>
            <person name="Kunzler P."/>
            <person name="Thony-Meyer L."/>
        </authorList>
    </citation>
    <scope>FUNCTION</scope>
    <scope>COFACTOR</scope>
    <scope>SUBCELLULAR LOCATION</scope>
</reference>
<reference evidence="14" key="8">
    <citation type="journal article" date="2000" name="FEBS Lett.">
        <title>The symbiotically essential cbb(3)-type oxidase of Bradyrhizobium japonicum is a proton pump.</title>
        <authorList>
            <person name="Arslan E."/>
            <person name="Kannt A."/>
            <person name="Thony-Meyer L."/>
            <person name="Hennecke H."/>
        </authorList>
    </citation>
    <scope>FUNCTION</scope>
    <scope>CATALYTIC ACTIVITY OF THE CYTOCHROME C OXIDASE COMPLEX</scope>
</reference>
<proteinExistence type="evidence at protein level"/>
<sequence length="290" mass="31024">MTDHSEFDSVSGKTTTGHEWDGIKELNTPLPRWWVICFYLTIVWAIGYWIVYPAWPLISSNTTGLFGYSSRADVAVELANLEKIRGDKMAALGAASLADVEKDPALLALARAKGKTVFGDNCAPCHGSGGAGAKGFPNLNDDDWLWGGTLDQIMQTIQFGARSGHAKTHEGQMLAFGKDGVLKGDEIVTVANYVRSLSGLPTRKGYDAAKGEKIFVENCVACHGDGGKGNQEMGAPNLTDKIWLYGSDEAALIETISQGRAGVMPAWEGRLDPSTIKAMAVYVHSLGGGK</sequence>
<organism>
    <name type="scientific">Bradyrhizobium diazoefficiens (strain JCM 10833 / BCRC 13528 / IAM 13628 / NBRC 14792 / USDA 110)</name>
    <dbReference type="NCBI Taxonomy" id="224911"/>
    <lineage>
        <taxon>Bacteria</taxon>
        <taxon>Pseudomonadati</taxon>
        <taxon>Pseudomonadota</taxon>
        <taxon>Alphaproteobacteria</taxon>
        <taxon>Hyphomicrobiales</taxon>
        <taxon>Nitrobacteraceae</taxon>
        <taxon>Bradyrhizobium</taxon>
    </lineage>
</organism>